<organismHost>
    <name type="scientific">Sus scrofa</name>
    <name type="common">Pig</name>
    <dbReference type="NCBI Taxonomy" id="9823"/>
</organismHost>
<proteinExistence type="evidence at transcript level"/>
<accession>P29129</accession>
<name>ICP0_SUHVF</name>
<feature type="chain" id="PRO_0000056358" description="E3 ubiquitin-protein ligase ICP0">
    <location>
        <begin position="1"/>
        <end position="410"/>
    </location>
</feature>
<feature type="zinc finger region" description="RING-type" evidence="2">
    <location>
        <begin position="46"/>
        <end position="85"/>
    </location>
</feature>
<feature type="region of interest" description="Disordered" evidence="3">
    <location>
        <begin position="243"/>
        <end position="410"/>
    </location>
</feature>
<feature type="compositionally biased region" description="Basic residues" evidence="3">
    <location>
        <begin position="287"/>
        <end position="315"/>
    </location>
</feature>
<feature type="compositionally biased region" description="Low complexity" evidence="3">
    <location>
        <begin position="329"/>
        <end position="340"/>
    </location>
</feature>
<feature type="compositionally biased region" description="Low complexity" evidence="3">
    <location>
        <begin position="348"/>
        <end position="399"/>
    </location>
</feature>
<keyword id="KW-0010">Activator</keyword>
<keyword id="KW-0238">DNA-binding</keyword>
<keyword id="KW-0244">Early protein</keyword>
<keyword id="KW-0945">Host-virus interaction</keyword>
<keyword id="KW-1090">Inhibition of host innate immune response by virus</keyword>
<keyword id="KW-1092">Inhibition of host IRF3 by virus</keyword>
<keyword id="KW-1098">Inhibition of host mitotic exit by virus</keyword>
<keyword id="KW-1113">Inhibition of host RLR pathway by virus</keyword>
<keyword id="KW-0479">Metal-binding</keyword>
<keyword id="KW-1121">Modulation of host cell cycle by virus</keyword>
<keyword id="KW-1128">Modulation of host ubiquitin pathway by viral E3 ligase</keyword>
<keyword id="KW-1130">Modulation of host ubiquitin pathway by virus</keyword>
<keyword id="KW-0678">Repressor</keyword>
<keyword id="KW-0804">Transcription</keyword>
<keyword id="KW-0805">Transcription regulation</keyword>
<keyword id="KW-0808">Transferase</keyword>
<keyword id="KW-0832">Ubl conjugation</keyword>
<keyword id="KW-0899">Viral immunoevasion</keyword>
<keyword id="KW-1251">Viral latency</keyword>
<keyword id="KW-1272">Viral reactivation from latency</keyword>
<keyword id="KW-0862">Zinc</keyword>
<keyword id="KW-0863">Zinc-finger</keyword>
<organism>
    <name type="scientific">Suid herpesvirus 1 (strain Indiana-Funkhauser / Becker)</name>
    <name type="common">SuHV-1</name>
    <name type="synonym">Pseudorabies virus (strain Indiana-Funkhauser / Becker)</name>
    <dbReference type="NCBI Taxonomy" id="31523"/>
    <lineage>
        <taxon>Viruses</taxon>
        <taxon>Duplodnaviria</taxon>
        <taxon>Heunggongvirae</taxon>
        <taxon>Peploviricota</taxon>
        <taxon>Herviviricetes</taxon>
        <taxon>Herpesvirales</taxon>
        <taxon>Orthoherpesviridae</taxon>
        <taxon>Alphaherpesvirinae</taxon>
        <taxon>Varicellovirus</taxon>
        <taxon>Varicellovirus suidalpha1</taxon>
        <taxon>Suid herpesvirus 1</taxon>
    </lineage>
</organism>
<gene>
    <name type="primary">EP0</name>
</gene>
<comment type="function">
    <text evidence="1">Evades nuclear antiviral defenses triggered by dsDNA viruses. Acts during the initial stages of lytic infection and the reactivation of latent viral genome. Prevents the antiviral effect of nuclear bodies by degrading host PML and SP100.</text>
</comment>
<comment type="catalytic activity">
    <reaction>
        <text>S-ubiquitinyl-[E2 ubiquitin-conjugating enzyme]-L-cysteine + [acceptor protein]-L-lysine = [E2 ubiquitin-conjugating enzyme]-L-cysteine + N(6)-ubiquitinyl-[acceptor protein]-L-lysine.</text>
        <dbReference type="EC" id="2.3.2.27"/>
    </reaction>
</comment>
<comment type="PTM">
    <text evidence="1">Auto-ubiquitinated.</text>
</comment>
<evidence type="ECO:0000250" key="1"/>
<evidence type="ECO:0000255" key="2">
    <source>
        <dbReference type="PROSITE-ProRule" id="PRU00175"/>
    </source>
</evidence>
<evidence type="ECO:0000256" key="3">
    <source>
        <dbReference type="SAM" id="MobiDB-lite"/>
    </source>
</evidence>
<evidence type="ECO:0000305" key="4"/>
<dbReference type="EC" id="2.3.2.27"/>
<dbReference type="EMBL" id="M57504">
    <property type="protein sequence ID" value="AAA47463.1"/>
    <property type="molecule type" value="mRNA"/>
</dbReference>
<dbReference type="SMR" id="P29129"/>
<dbReference type="GO" id="GO:0003677">
    <property type="term" value="F:DNA binding"/>
    <property type="evidence" value="ECO:0007669"/>
    <property type="project" value="UniProtKB-KW"/>
</dbReference>
<dbReference type="GO" id="GO:0061630">
    <property type="term" value="F:ubiquitin protein ligase activity"/>
    <property type="evidence" value="ECO:0007669"/>
    <property type="project" value="TreeGrafter"/>
</dbReference>
<dbReference type="GO" id="GO:0008270">
    <property type="term" value="F:zinc ion binding"/>
    <property type="evidence" value="ECO:0007669"/>
    <property type="project" value="UniProtKB-KW"/>
</dbReference>
<dbReference type="GO" id="GO:0006513">
    <property type="term" value="P:protein monoubiquitination"/>
    <property type="evidence" value="ECO:0007669"/>
    <property type="project" value="TreeGrafter"/>
</dbReference>
<dbReference type="GO" id="GO:0000209">
    <property type="term" value="P:protein polyubiquitination"/>
    <property type="evidence" value="ECO:0007669"/>
    <property type="project" value="TreeGrafter"/>
</dbReference>
<dbReference type="GO" id="GO:0019046">
    <property type="term" value="P:release from viral latency"/>
    <property type="evidence" value="ECO:0007669"/>
    <property type="project" value="UniProtKB-KW"/>
</dbReference>
<dbReference type="GO" id="GO:0075342">
    <property type="term" value="P:symbiont-mediated disruption of host cell PML body"/>
    <property type="evidence" value="ECO:0000250"/>
    <property type="project" value="UniProtKB"/>
</dbReference>
<dbReference type="GO" id="GO:0039593">
    <property type="term" value="P:symbiont-mediated perturbation of host exit from mitosis"/>
    <property type="evidence" value="ECO:0007669"/>
    <property type="project" value="UniProtKB-KW"/>
</dbReference>
<dbReference type="GO" id="GO:0039648">
    <property type="term" value="P:symbiont-mediated perturbation of host ubiquitin-like protein modification"/>
    <property type="evidence" value="ECO:0007669"/>
    <property type="project" value="UniProtKB-KW"/>
</dbReference>
<dbReference type="GO" id="GO:0039548">
    <property type="term" value="P:symbiont-mediated suppression of host cytoplasmic pattern recognition receptor signaling pathway via inhibition of IRF3 activity"/>
    <property type="evidence" value="ECO:0007669"/>
    <property type="project" value="UniProtKB-KW"/>
</dbReference>
<dbReference type="CDD" id="cd23130">
    <property type="entry name" value="RING-HC_EHV1-like"/>
    <property type="match status" value="1"/>
</dbReference>
<dbReference type="Gene3D" id="3.30.40.10">
    <property type="entry name" value="Zinc/RING finger domain, C3HC4 (zinc finger)"/>
    <property type="match status" value="1"/>
</dbReference>
<dbReference type="InterPro" id="IPR001841">
    <property type="entry name" value="Znf_RING"/>
</dbReference>
<dbReference type="InterPro" id="IPR013083">
    <property type="entry name" value="Znf_RING/FYVE/PHD"/>
</dbReference>
<dbReference type="InterPro" id="IPR017907">
    <property type="entry name" value="Znf_RING_CS"/>
</dbReference>
<dbReference type="PANTHER" id="PTHR46077">
    <property type="entry name" value="E3 UBIQUITIN-PROTEIN LIGASE TOPORS"/>
    <property type="match status" value="1"/>
</dbReference>
<dbReference type="PANTHER" id="PTHR46077:SF1">
    <property type="entry name" value="TOP1 BINDING ARGININE_SERINE RICH PROTEIN, E3 UBIQUITIN LIGASE"/>
    <property type="match status" value="1"/>
</dbReference>
<dbReference type="Pfam" id="PF13639">
    <property type="entry name" value="zf-RING_2"/>
    <property type="match status" value="1"/>
</dbReference>
<dbReference type="SMART" id="SM00184">
    <property type="entry name" value="RING"/>
    <property type="match status" value="1"/>
</dbReference>
<dbReference type="SUPFAM" id="SSF57850">
    <property type="entry name" value="RING/U-box"/>
    <property type="match status" value="1"/>
</dbReference>
<dbReference type="PROSITE" id="PS00518">
    <property type="entry name" value="ZF_RING_1"/>
    <property type="match status" value="1"/>
</dbReference>
<dbReference type="PROSITE" id="PS50089">
    <property type="entry name" value="ZF_RING_2"/>
    <property type="match status" value="1"/>
</dbReference>
<protein>
    <recommendedName>
        <fullName>E3 ubiquitin-protein ligase ICP0</fullName>
        <ecNumber>2.3.2.27</ecNumber>
    </recommendedName>
    <alternativeName>
        <fullName>Early protein 0</fullName>
        <shortName>EP0</shortName>
    </alternativeName>
    <alternativeName>
        <fullName evidence="4">RING-type E3 ubiquitin transferase ICP0</fullName>
    </alternativeName>
</protein>
<sequence>MGCTVSRRRTTTAEASSAWGIFGFYRPRSPSPPPQRLSLPLTVMDCPICLDVAATEAQTLPCMHKFCLDCIQRWTLTSTACPLCNARVTSILHHVDSDASFVETPVEGATDVDGEEDEPVGGGFAVIWGEDYTEEVRHEEAEGQGSGSGSRARPRVPVFNWLYGQVSTVIESDPIREAVVDNIVEIIQEHGMNRQRVTEAMLPMFGANTHALVDTLFDISAQWMRRMQRRAPMSHQGVNYIDTSESEAHSDSEVSSPDEEDSGASSSGVHTEDLTEASESADDQRPAPRRSPRRARRAAVLRREQRRTRCLRRGRTGGQAQGETPEAPSSGEGSSAQHGASGAGAGPGSANTAASARSSPSSSPSSSMRRPSPSASAPETAAPRGGPPASSSSGSPRSATIFIDLTQDDD</sequence>
<reference key="1">
    <citation type="journal article" date="1991" name="J. Virol.">
        <title>Cloning of the latency gene and the early protein 0 gene of pseudorabies virus.</title>
        <authorList>
            <person name="Cheung A.K."/>
        </authorList>
    </citation>
    <scope>NUCLEOTIDE SEQUENCE [MRNA]</scope>
</reference>